<name>RL16_PASMU</name>
<feature type="chain" id="PRO_0000062161" description="Large ribosomal subunit protein uL16">
    <location>
        <begin position="1"/>
        <end position="136"/>
    </location>
</feature>
<keyword id="KW-1185">Reference proteome</keyword>
<keyword id="KW-0687">Ribonucleoprotein</keyword>
<keyword id="KW-0689">Ribosomal protein</keyword>
<keyword id="KW-0694">RNA-binding</keyword>
<keyword id="KW-0699">rRNA-binding</keyword>
<keyword id="KW-0820">tRNA-binding</keyword>
<sequence length="136" mass="15196">MLQPKRTKFRKVHKGRNRGIAAGTEVSFGTFGLKAVGRGRLTARQIEAARRAMTRAVKRQGKIWIRVFPDKPITEKPLEVRMGKGKGNVEYWVALIQPGKVLYEMDGVSEEIARNAFALAAAKLPIKTTFVTKTVM</sequence>
<accession>Q9CL38</accession>
<evidence type="ECO:0000255" key="1">
    <source>
        <dbReference type="HAMAP-Rule" id="MF_01342"/>
    </source>
</evidence>
<evidence type="ECO:0000305" key="2"/>
<reference key="1">
    <citation type="journal article" date="2001" name="Proc. Natl. Acad. Sci. U.S.A.">
        <title>Complete genomic sequence of Pasteurella multocida Pm70.</title>
        <authorList>
            <person name="May B.J."/>
            <person name="Zhang Q."/>
            <person name="Li L.L."/>
            <person name="Paustian M.L."/>
            <person name="Whittam T.S."/>
            <person name="Kapur V."/>
        </authorList>
    </citation>
    <scope>NUCLEOTIDE SEQUENCE [LARGE SCALE GENOMIC DNA]</scope>
    <source>
        <strain>Pm70</strain>
    </source>
</reference>
<dbReference type="EMBL" id="AE004439">
    <property type="protein sequence ID" value="AAK03492.1"/>
    <property type="molecule type" value="Genomic_DNA"/>
</dbReference>
<dbReference type="RefSeq" id="WP_005717925.1">
    <property type="nucleotide sequence ID" value="NC_002663.1"/>
</dbReference>
<dbReference type="SMR" id="Q9CL38"/>
<dbReference type="STRING" id="272843.PM1408"/>
<dbReference type="EnsemblBacteria" id="AAK03492">
    <property type="protein sequence ID" value="AAK03492"/>
    <property type="gene ID" value="PM1408"/>
</dbReference>
<dbReference type="GeneID" id="77207033"/>
<dbReference type="KEGG" id="pmu:PM1408"/>
<dbReference type="HOGENOM" id="CLU_078858_2_1_6"/>
<dbReference type="OrthoDB" id="9802589at2"/>
<dbReference type="Proteomes" id="UP000000809">
    <property type="component" value="Chromosome"/>
</dbReference>
<dbReference type="GO" id="GO:0022625">
    <property type="term" value="C:cytosolic large ribosomal subunit"/>
    <property type="evidence" value="ECO:0007669"/>
    <property type="project" value="TreeGrafter"/>
</dbReference>
<dbReference type="GO" id="GO:0019843">
    <property type="term" value="F:rRNA binding"/>
    <property type="evidence" value="ECO:0007669"/>
    <property type="project" value="UniProtKB-UniRule"/>
</dbReference>
<dbReference type="GO" id="GO:0003735">
    <property type="term" value="F:structural constituent of ribosome"/>
    <property type="evidence" value="ECO:0007669"/>
    <property type="project" value="InterPro"/>
</dbReference>
<dbReference type="GO" id="GO:0000049">
    <property type="term" value="F:tRNA binding"/>
    <property type="evidence" value="ECO:0007669"/>
    <property type="project" value="UniProtKB-KW"/>
</dbReference>
<dbReference type="GO" id="GO:0006412">
    <property type="term" value="P:translation"/>
    <property type="evidence" value="ECO:0007669"/>
    <property type="project" value="UniProtKB-UniRule"/>
</dbReference>
<dbReference type="CDD" id="cd01433">
    <property type="entry name" value="Ribosomal_L16_L10e"/>
    <property type="match status" value="1"/>
</dbReference>
<dbReference type="FunFam" id="3.90.1170.10:FF:000001">
    <property type="entry name" value="50S ribosomal protein L16"/>
    <property type="match status" value="1"/>
</dbReference>
<dbReference type="Gene3D" id="3.90.1170.10">
    <property type="entry name" value="Ribosomal protein L10e/L16"/>
    <property type="match status" value="1"/>
</dbReference>
<dbReference type="HAMAP" id="MF_01342">
    <property type="entry name" value="Ribosomal_uL16"/>
    <property type="match status" value="1"/>
</dbReference>
<dbReference type="InterPro" id="IPR047873">
    <property type="entry name" value="Ribosomal_uL16"/>
</dbReference>
<dbReference type="InterPro" id="IPR000114">
    <property type="entry name" value="Ribosomal_uL16_bact-type"/>
</dbReference>
<dbReference type="InterPro" id="IPR020798">
    <property type="entry name" value="Ribosomal_uL16_CS"/>
</dbReference>
<dbReference type="InterPro" id="IPR016180">
    <property type="entry name" value="Ribosomal_uL16_dom"/>
</dbReference>
<dbReference type="InterPro" id="IPR036920">
    <property type="entry name" value="Ribosomal_uL16_sf"/>
</dbReference>
<dbReference type="NCBIfam" id="TIGR01164">
    <property type="entry name" value="rplP_bact"/>
    <property type="match status" value="1"/>
</dbReference>
<dbReference type="PANTHER" id="PTHR12220">
    <property type="entry name" value="50S/60S RIBOSOMAL PROTEIN L16"/>
    <property type="match status" value="1"/>
</dbReference>
<dbReference type="PANTHER" id="PTHR12220:SF13">
    <property type="entry name" value="LARGE RIBOSOMAL SUBUNIT PROTEIN UL16M"/>
    <property type="match status" value="1"/>
</dbReference>
<dbReference type="Pfam" id="PF00252">
    <property type="entry name" value="Ribosomal_L16"/>
    <property type="match status" value="1"/>
</dbReference>
<dbReference type="PRINTS" id="PR00060">
    <property type="entry name" value="RIBOSOMALL16"/>
</dbReference>
<dbReference type="SUPFAM" id="SSF54686">
    <property type="entry name" value="Ribosomal protein L16p/L10e"/>
    <property type="match status" value="1"/>
</dbReference>
<dbReference type="PROSITE" id="PS00586">
    <property type="entry name" value="RIBOSOMAL_L16_1"/>
    <property type="match status" value="1"/>
</dbReference>
<dbReference type="PROSITE" id="PS00701">
    <property type="entry name" value="RIBOSOMAL_L16_2"/>
    <property type="match status" value="1"/>
</dbReference>
<proteinExistence type="inferred from homology"/>
<organism>
    <name type="scientific">Pasteurella multocida (strain Pm70)</name>
    <dbReference type="NCBI Taxonomy" id="272843"/>
    <lineage>
        <taxon>Bacteria</taxon>
        <taxon>Pseudomonadati</taxon>
        <taxon>Pseudomonadota</taxon>
        <taxon>Gammaproteobacteria</taxon>
        <taxon>Pasteurellales</taxon>
        <taxon>Pasteurellaceae</taxon>
        <taxon>Pasteurella</taxon>
    </lineage>
</organism>
<protein>
    <recommendedName>
        <fullName evidence="1">Large ribosomal subunit protein uL16</fullName>
    </recommendedName>
    <alternativeName>
        <fullName evidence="2">50S ribosomal protein L16</fullName>
    </alternativeName>
</protein>
<comment type="function">
    <text evidence="1">Binds 23S rRNA and is also seen to make contacts with the A and possibly P site tRNAs.</text>
</comment>
<comment type="subunit">
    <text evidence="1">Part of the 50S ribosomal subunit.</text>
</comment>
<comment type="similarity">
    <text evidence="1">Belongs to the universal ribosomal protein uL16 family.</text>
</comment>
<gene>
    <name evidence="1" type="primary">rplP</name>
    <name evidence="1" type="synonym">rpl16</name>
    <name type="ordered locus">PM1408</name>
</gene>